<protein>
    <recommendedName>
        <fullName evidence="1">Glutamate-1-semialdehyde 2,1-aminomutase</fullName>
        <shortName evidence="1">GSA</shortName>
        <ecNumber evidence="1">5.4.3.8</ecNumber>
    </recommendedName>
    <alternativeName>
        <fullName evidence="1">Glutamate-1-semialdehyde aminotransferase</fullName>
        <shortName evidence="1">GSA-AT</shortName>
    </alternativeName>
</protein>
<comment type="catalytic activity">
    <reaction evidence="1">
        <text>(S)-4-amino-5-oxopentanoate = 5-aminolevulinate</text>
        <dbReference type="Rhea" id="RHEA:14265"/>
        <dbReference type="ChEBI" id="CHEBI:57501"/>
        <dbReference type="ChEBI" id="CHEBI:356416"/>
        <dbReference type="EC" id="5.4.3.8"/>
    </reaction>
</comment>
<comment type="cofactor">
    <cofactor evidence="1">
        <name>pyridoxal 5'-phosphate</name>
        <dbReference type="ChEBI" id="CHEBI:597326"/>
    </cofactor>
</comment>
<comment type="pathway">
    <text evidence="1">Porphyrin-containing compound metabolism; protoporphyrin-IX biosynthesis; 5-aminolevulinate from L-glutamyl-tRNA(Glu): step 2/2.</text>
</comment>
<comment type="subunit">
    <text evidence="1">Homodimer.</text>
</comment>
<comment type="subcellular location">
    <subcellularLocation>
        <location evidence="1">Cytoplasm</location>
    </subcellularLocation>
</comment>
<comment type="similarity">
    <text evidence="1">Belongs to the class-III pyridoxal-phosphate-dependent aminotransferase family. HemL subfamily.</text>
</comment>
<proteinExistence type="inferred from homology"/>
<organism>
    <name type="scientific">Trichlorobacter lovleyi (strain ATCC BAA-1151 / DSM 17278 / SZ)</name>
    <name type="common">Geobacter lovleyi</name>
    <dbReference type="NCBI Taxonomy" id="398767"/>
    <lineage>
        <taxon>Bacteria</taxon>
        <taxon>Pseudomonadati</taxon>
        <taxon>Thermodesulfobacteriota</taxon>
        <taxon>Desulfuromonadia</taxon>
        <taxon>Geobacterales</taxon>
        <taxon>Geobacteraceae</taxon>
        <taxon>Trichlorobacter</taxon>
    </lineage>
</organism>
<sequence>MTHTRSHTLFDQARRIIPGGVNSPVRAFKSVGADPLFIKRASGSKIFDEDNNTYIDYVGSWGPMILGHCFPEVVNAVKQCMENGSSFGAPTELEITLAQMVIDAMPSIEMVRMVSSGTEATMSAIRLARGYTGRDKILKFSGCYHGHADALLVKAGSGAATFGVPDSPGVPADFAKHTLTAEYNSLASVKTLITENSGQIACIILEPVAGNMGTVPPRPGFLEGLRELCTNEGIILIFDEVMSGFRVAYGGAQSLYGVTPDMTTLGKIIGGGLPVGAFGGKREIMEKLSPSGGVYQAGTLSGNPLAMTAGIETLKFLQQPGFYDRLEEKSSQLSEGISLAARDAGYPLYSTRVGSMFCAFFTPHEVFDWTTAAACDTKAFARYFLAMLEEGVYLAPSQFETAFMSAAHSQQDIEATIAAARKCFKLIR</sequence>
<reference key="1">
    <citation type="submission" date="2008-05" db="EMBL/GenBank/DDBJ databases">
        <title>Complete sequence of chromosome of Geobacter lovleyi SZ.</title>
        <authorList>
            <consortium name="US DOE Joint Genome Institute"/>
            <person name="Lucas S."/>
            <person name="Copeland A."/>
            <person name="Lapidus A."/>
            <person name="Glavina del Rio T."/>
            <person name="Dalin E."/>
            <person name="Tice H."/>
            <person name="Bruce D."/>
            <person name="Goodwin L."/>
            <person name="Pitluck S."/>
            <person name="Chertkov O."/>
            <person name="Meincke L."/>
            <person name="Brettin T."/>
            <person name="Detter J.C."/>
            <person name="Han C."/>
            <person name="Tapia R."/>
            <person name="Kuske C.R."/>
            <person name="Schmutz J."/>
            <person name="Larimer F."/>
            <person name="Land M."/>
            <person name="Hauser L."/>
            <person name="Kyrpides N."/>
            <person name="Mikhailova N."/>
            <person name="Sung Y."/>
            <person name="Fletcher K.E."/>
            <person name="Ritalahti K.M."/>
            <person name="Loeffler F.E."/>
            <person name="Richardson P."/>
        </authorList>
    </citation>
    <scope>NUCLEOTIDE SEQUENCE [LARGE SCALE GENOMIC DNA]</scope>
    <source>
        <strain>ATCC BAA-1151 / DSM 17278 / SZ</strain>
    </source>
</reference>
<gene>
    <name evidence="1" type="primary">hemL</name>
    <name type="ordered locus">Glov_3139</name>
</gene>
<evidence type="ECO:0000255" key="1">
    <source>
        <dbReference type="HAMAP-Rule" id="MF_00375"/>
    </source>
</evidence>
<name>GSA_TRIL1</name>
<accession>B3E9X0</accession>
<keyword id="KW-0963">Cytoplasm</keyword>
<keyword id="KW-0413">Isomerase</keyword>
<keyword id="KW-0627">Porphyrin biosynthesis</keyword>
<keyword id="KW-0663">Pyridoxal phosphate</keyword>
<keyword id="KW-1185">Reference proteome</keyword>
<dbReference type="EC" id="5.4.3.8" evidence="1"/>
<dbReference type="EMBL" id="CP001089">
    <property type="protein sequence ID" value="ACD96845.1"/>
    <property type="molecule type" value="Genomic_DNA"/>
</dbReference>
<dbReference type="RefSeq" id="WP_012471169.1">
    <property type="nucleotide sequence ID" value="NC_010814.1"/>
</dbReference>
<dbReference type="SMR" id="B3E9X0"/>
<dbReference type="STRING" id="398767.Glov_3139"/>
<dbReference type="KEGG" id="glo:Glov_3139"/>
<dbReference type="eggNOG" id="COG0001">
    <property type="taxonomic scope" value="Bacteria"/>
</dbReference>
<dbReference type="HOGENOM" id="CLU_016922_1_5_7"/>
<dbReference type="OrthoDB" id="9801052at2"/>
<dbReference type="UniPathway" id="UPA00251">
    <property type="reaction ID" value="UER00317"/>
</dbReference>
<dbReference type="Proteomes" id="UP000002420">
    <property type="component" value="Chromosome"/>
</dbReference>
<dbReference type="GO" id="GO:0005737">
    <property type="term" value="C:cytoplasm"/>
    <property type="evidence" value="ECO:0007669"/>
    <property type="project" value="UniProtKB-SubCell"/>
</dbReference>
<dbReference type="GO" id="GO:0042286">
    <property type="term" value="F:glutamate-1-semialdehyde 2,1-aminomutase activity"/>
    <property type="evidence" value="ECO:0007669"/>
    <property type="project" value="UniProtKB-UniRule"/>
</dbReference>
<dbReference type="GO" id="GO:0030170">
    <property type="term" value="F:pyridoxal phosphate binding"/>
    <property type="evidence" value="ECO:0007669"/>
    <property type="project" value="InterPro"/>
</dbReference>
<dbReference type="GO" id="GO:0008483">
    <property type="term" value="F:transaminase activity"/>
    <property type="evidence" value="ECO:0007669"/>
    <property type="project" value="InterPro"/>
</dbReference>
<dbReference type="GO" id="GO:0006782">
    <property type="term" value="P:protoporphyrinogen IX biosynthetic process"/>
    <property type="evidence" value="ECO:0007669"/>
    <property type="project" value="UniProtKB-UniRule"/>
</dbReference>
<dbReference type="CDD" id="cd00610">
    <property type="entry name" value="OAT_like"/>
    <property type="match status" value="1"/>
</dbReference>
<dbReference type="FunFam" id="3.40.640.10:FF:000021">
    <property type="entry name" value="Glutamate-1-semialdehyde 2,1-aminomutase"/>
    <property type="match status" value="1"/>
</dbReference>
<dbReference type="Gene3D" id="3.90.1150.10">
    <property type="entry name" value="Aspartate Aminotransferase, domain 1"/>
    <property type="match status" value="1"/>
</dbReference>
<dbReference type="Gene3D" id="3.40.640.10">
    <property type="entry name" value="Type I PLP-dependent aspartate aminotransferase-like (Major domain)"/>
    <property type="match status" value="1"/>
</dbReference>
<dbReference type="HAMAP" id="MF_00375">
    <property type="entry name" value="HemL_aminotrans_3"/>
    <property type="match status" value="1"/>
</dbReference>
<dbReference type="InterPro" id="IPR004639">
    <property type="entry name" value="4pyrrol_synth_GluAld_NH2Trfase"/>
</dbReference>
<dbReference type="InterPro" id="IPR005814">
    <property type="entry name" value="Aminotrans_3"/>
</dbReference>
<dbReference type="InterPro" id="IPR049704">
    <property type="entry name" value="Aminotrans_3_PPA_site"/>
</dbReference>
<dbReference type="InterPro" id="IPR015424">
    <property type="entry name" value="PyrdxlP-dep_Trfase"/>
</dbReference>
<dbReference type="InterPro" id="IPR015421">
    <property type="entry name" value="PyrdxlP-dep_Trfase_major"/>
</dbReference>
<dbReference type="InterPro" id="IPR015422">
    <property type="entry name" value="PyrdxlP-dep_Trfase_small"/>
</dbReference>
<dbReference type="NCBIfam" id="TIGR00713">
    <property type="entry name" value="hemL"/>
    <property type="match status" value="1"/>
</dbReference>
<dbReference type="NCBIfam" id="NF000818">
    <property type="entry name" value="PRK00062.1"/>
    <property type="match status" value="1"/>
</dbReference>
<dbReference type="PANTHER" id="PTHR43713">
    <property type="entry name" value="GLUTAMATE-1-SEMIALDEHYDE 2,1-AMINOMUTASE"/>
    <property type="match status" value="1"/>
</dbReference>
<dbReference type="PANTHER" id="PTHR43713:SF3">
    <property type="entry name" value="GLUTAMATE-1-SEMIALDEHYDE 2,1-AMINOMUTASE 1, CHLOROPLASTIC-RELATED"/>
    <property type="match status" value="1"/>
</dbReference>
<dbReference type="Pfam" id="PF00202">
    <property type="entry name" value="Aminotran_3"/>
    <property type="match status" value="1"/>
</dbReference>
<dbReference type="SUPFAM" id="SSF53383">
    <property type="entry name" value="PLP-dependent transferases"/>
    <property type="match status" value="1"/>
</dbReference>
<dbReference type="PROSITE" id="PS00600">
    <property type="entry name" value="AA_TRANSFER_CLASS_3"/>
    <property type="match status" value="1"/>
</dbReference>
<feature type="chain" id="PRO_1000121892" description="Glutamate-1-semialdehyde 2,1-aminomutase">
    <location>
        <begin position="1"/>
        <end position="428"/>
    </location>
</feature>
<feature type="modified residue" description="N6-(pyridoxal phosphate)lysine" evidence="1">
    <location>
        <position position="267"/>
    </location>
</feature>